<name>NU6M_PROWI</name>
<comment type="function">
    <text evidence="1">Core subunit of the mitochondrial membrane respiratory chain NADH dehydrogenase (Complex I) that is believed to belong to the minimal assembly required for catalysis. Complex I functions in the transfer of electrons from NADH to the respiratory chain. The immediate electron acceptor for the enzyme is believed to be ubiquinone (By similarity).</text>
</comment>
<comment type="catalytic activity">
    <reaction>
        <text>a ubiquinone + NADH + 5 H(+)(in) = a ubiquinol + NAD(+) + 4 H(+)(out)</text>
        <dbReference type="Rhea" id="RHEA:29091"/>
        <dbReference type="Rhea" id="RHEA-COMP:9565"/>
        <dbReference type="Rhea" id="RHEA-COMP:9566"/>
        <dbReference type="ChEBI" id="CHEBI:15378"/>
        <dbReference type="ChEBI" id="CHEBI:16389"/>
        <dbReference type="ChEBI" id="CHEBI:17976"/>
        <dbReference type="ChEBI" id="CHEBI:57540"/>
        <dbReference type="ChEBI" id="CHEBI:57945"/>
        <dbReference type="EC" id="7.1.1.2"/>
    </reaction>
</comment>
<comment type="subcellular location">
    <subcellularLocation>
        <location evidence="3">Mitochondrion membrane</location>
        <topology evidence="3">Multi-pass membrane protein</topology>
    </subcellularLocation>
</comment>
<comment type="similarity">
    <text evidence="3">Belongs to the complex I subunit 6 family.</text>
</comment>
<dbReference type="EC" id="7.1.1.2"/>
<dbReference type="EMBL" id="U02970">
    <property type="protein sequence ID" value="AAD12654.1"/>
    <property type="molecule type" value="Genomic_DNA"/>
</dbReference>
<dbReference type="PIR" id="T11935">
    <property type="entry name" value="T11935"/>
</dbReference>
<dbReference type="RefSeq" id="NP_042266.1">
    <property type="nucleotide sequence ID" value="NC_001613.1"/>
</dbReference>
<dbReference type="SMR" id="Q37626"/>
<dbReference type="GeneID" id="802090"/>
<dbReference type="GO" id="GO:0031966">
    <property type="term" value="C:mitochondrial membrane"/>
    <property type="evidence" value="ECO:0007669"/>
    <property type="project" value="UniProtKB-SubCell"/>
</dbReference>
<dbReference type="GO" id="GO:0008137">
    <property type="term" value="F:NADH dehydrogenase (ubiquinone) activity"/>
    <property type="evidence" value="ECO:0007669"/>
    <property type="project" value="UniProtKB-EC"/>
</dbReference>
<dbReference type="Gene3D" id="1.20.120.1200">
    <property type="entry name" value="NADH-ubiquinone/plastoquinone oxidoreductase chain 6, subunit NuoJ"/>
    <property type="match status" value="1"/>
</dbReference>
<dbReference type="InterPro" id="IPR001457">
    <property type="entry name" value="NADH_UbQ/plastoQ_OxRdtase_su6"/>
</dbReference>
<dbReference type="InterPro" id="IPR042106">
    <property type="entry name" value="Nuo/plastoQ_OxRdtase_6_NuoJ"/>
</dbReference>
<dbReference type="NCBIfam" id="NF005164">
    <property type="entry name" value="PRK06638.1-4"/>
    <property type="match status" value="1"/>
</dbReference>
<dbReference type="PANTHER" id="PTHR33269">
    <property type="entry name" value="NADH-UBIQUINONE OXIDOREDUCTASE CHAIN 6"/>
    <property type="match status" value="1"/>
</dbReference>
<dbReference type="PANTHER" id="PTHR33269:SF17">
    <property type="entry name" value="NADH-UBIQUINONE OXIDOREDUCTASE CHAIN 6"/>
    <property type="match status" value="1"/>
</dbReference>
<dbReference type="Pfam" id="PF00499">
    <property type="entry name" value="Oxidored_q3"/>
    <property type="match status" value="1"/>
</dbReference>
<protein>
    <recommendedName>
        <fullName>NADH-ubiquinone oxidoreductase chain 6</fullName>
        <ecNumber>7.1.1.2</ecNumber>
    </recommendedName>
    <alternativeName>
        <fullName>NADH dehydrogenase subunit 6</fullName>
    </alternativeName>
</protein>
<evidence type="ECO:0000250" key="1"/>
<evidence type="ECO:0000255" key="2"/>
<evidence type="ECO:0000305" key="3"/>
<organism>
    <name type="scientific">Prototheca wickerhamii</name>
    <dbReference type="NCBI Taxonomy" id="3111"/>
    <lineage>
        <taxon>Eukaryota</taxon>
        <taxon>Viridiplantae</taxon>
        <taxon>Chlorophyta</taxon>
        <taxon>core chlorophytes</taxon>
        <taxon>Trebouxiophyceae</taxon>
        <taxon>Chlorellales</taxon>
        <taxon>Chlorellaceae</taxon>
        <taxon>Prototheca</taxon>
    </lineage>
</organism>
<proteinExistence type="inferred from homology"/>
<keyword id="KW-0249">Electron transport</keyword>
<keyword id="KW-0472">Membrane</keyword>
<keyword id="KW-0496">Mitochondrion</keyword>
<keyword id="KW-0520">NAD</keyword>
<keyword id="KW-0679">Respiratory chain</keyword>
<keyword id="KW-1278">Translocase</keyword>
<keyword id="KW-0812">Transmembrane</keyword>
<keyword id="KW-1133">Transmembrane helix</keyword>
<keyword id="KW-0813">Transport</keyword>
<keyword id="KW-0830">Ubiquinone</keyword>
<sequence>MDFLFYIFSSLTLISGSLVIQARNPVHSVLFLVLVFFNAAGLLVLLGLDFFALIFLVVYVGAIAVLFLFVVMMLNIRITEISEKRLRYLPVGGVLGVLFLFEICILIDNDCIPLLSYDIENTALLANYNQLSFIDWRMYLSTSHTIDALGSLLYTYYFYFFLVASLILLVAMIGAIVLTMQKGIRIKRQQVFLQNTRDFAKTIRKVA</sequence>
<gene>
    <name type="primary">ND6</name>
    <name type="synonym">NAD6</name>
</gene>
<feature type="chain" id="PRO_0000118321" description="NADH-ubiquinone oxidoreductase chain 6">
    <location>
        <begin position="1"/>
        <end position="207"/>
    </location>
</feature>
<feature type="transmembrane region" description="Helical" evidence="2">
    <location>
        <begin position="1"/>
        <end position="21"/>
    </location>
</feature>
<feature type="transmembrane region" description="Helical" evidence="2">
    <location>
        <begin position="28"/>
        <end position="48"/>
    </location>
</feature>
<feature type="transmembrane region" description="Helical" evidence="2">
    <location>
        <begin position="50"/>
        <end position="70"/>
    </location>
</feature>
<feature type="transmembrane region" description="Helical" evidence="2">
    <location>
        <begin position="88"/>
        <end position="108"/>
    </location>
</feature>
<feature type="transmembrane region" description="Helical" evidence="2">
    <location>
        <begin position="158"/>
        <end position="178"/>
    </location>
</feature>
<geneLocation type="mitochondrion"/>
<accession>Q37626</accession>
<reference key="1">
    <citation type="journal article" date="1994" name="J. Mol. Biol.">
        <title>Complete sequence of the mitochondrial DNA of the chlorophyte alga Prototheca wickerhamii. Gene content and genome organization.</title>
        <authorList>
            <person name="Wolff G."/>
            <person name="Plante I."/>
            <person name="Lang B.F."/>
            <person name="Kueck U."/>
            <person name="Burger G."/>
        </authorList>
    </citation>
    <scope>NUCLEOTIDE SEQUENCE [GENOMIC DNA]</scope>
    <source>
        <strain>263-11</strain>
    </source>
</reference>